<proteinExistence type="inferred from homology"/>
<keyword id="KW-0349">Heme</keyword>
<keyword id="KW-0376">Hydrogen peroxide</keyword>
<keyword id="KW-0408">Iron</keyword>
<keyword id="KW-0479">Metal-binding</keyword>
<keyword id="KW-0560">Oxidoreductase</keyword>
<keyword id="KW-0575">Peroxidase</keyword>
<evidence type="ECO:0000250" key="1"/>
<evidence type="ECO:0000255" key="2">
    <source>
        <dbReference type="PROSITE-ProRule" id="PRU10013"/>
    </source>
</evidence>
<evidence type="ECO:0000256" key="3">
    <source>
        <dbReference type="SAM" id="MobiDB-lite"/>
    </source>
</evidence>
<evidence type="ECO:0000305" key="4"/>
<protein>
    <recommendedName>
        <fullName>Catalase</fullName>
        <ecNumber>1.11.1.6</ecNumber>
    </recommendedName>
</protein>
<name>CATA_BORPA</name>
<organism>
    <name type="scientific">Bordetella parapertussis (strain 12822 / ATCC BAA-587 / NCTC 13253)</name>
    <dbReference type="NCBI Taxonomy" id="257311"/>
    <lineage>
        <taxon>Bacteria</taxon>
        <taxon>Pseudomonadati</taxon>
        <taxon>Pseudomonadota</taxon>
        <taxon>Betaproteobacteria</taxon>
        <taxon>Burkholderiales</taxon>
        <taxon>Alcaligenaceae</taxon>
        <taxon>Bordetella</taxon>
    </lineage>
</organism>
<gene>
    <name type="primary">katA</name>
    <name type="ordered locus">BPP4406</name>
</gene>
<feature type="chain" id="PRO_0000084978" description="Catalase">
    <location>
        <begin position="1"/>
        <end position="482"/>
    </location>
</feature>
<feature type="region of interest" description="Disordered" evidence="3">
    <location>
        <begin position="1"/>
        <end position="21"/>
    </location>
</feature>
<feature type="compositionally biased region" description="Polar residues" evidence="3">
    <location>
        <begin position="1"/>
        <end position="11"/>
    </location>
</feature>
<feature type="active site" evidence="2">
    <location>
        <position position="57"/>
    </location>
</feature>
<feature type="active site" evidence="2">
    <location>
        <position position="130"/>
    </location>
</feature>
<feature type="binding site" description="axial binding residue" evidence="1">
    <location>
        <position position="340"/>
    </location>
    <ligand>
        <name>heme</name>
        <dbReference type="ChEBI" id="CHEBI:30413"/>
    </ligand>
    <ligandPart>
        <name>Fe</name>
        <dbReference type="ChEBI" id="CHEBI:18248"/>
    </ligandPart>
</feature>
<comment type="function">
    <text>Decomposes hydrogen peroxide into water and oxygen; serves to protect cells from the toxic effects of hydrogen peroxide.</text>
</comment>
<comment type="catalytic activity">
    <reaction evidence="2">
        <text>2 H2O2 = O2 + 2 H2O</text>
        <dbReference type="Rhea" id="RHEA:20309"/>
        <dbReference type="ChEBI" id="CHEBI:15377"/>
        <dbReference type="ChEBI" id="CHEBI:15379"/>
        <dbReference type="ChEBI" id="CHEBI:16240"/>
        <dbReference type="EC" id="1.11.1.6"/>
    </reaction>
</comment>
<comment type="cofactor">
    <cofactor evidence="1">
        <name>heme</name>
        <dbReference type="ChEBI" id="CHEBI:30413"/>
    </cofactor>
</comment>
<comment type="subunit">
    <text evidence="1">Homodimer.</text>
</comment>
<comment type="similarity">
    <text evidence="4">Belongs to the catalase family.</text>
</comment>
<sequence length="482" mass="54508">MNAMTNKTLTTAAGAPVADNNNTMTAGPRGPALLQDVWFLEKLAHFDRERIPERVVHAKGSGAYGTFTVTHDISRYTRARIFAEVGKQTPLFLRFSTVAGERGAADAERDVRGFAIKFYTDEGNWDLVGNNTPVFFIRDPLKFPDFIHTQKRDPKTNLRNATAAWDFWSLNPESLHQVTILMSDRGLPQNYRQQHGFGSHTYSFVNDAGERFYVKFHFKSQQGIACYTDGEAAELVGRDRESAQRDLFQNIEQGQFPRWTLKVQVMPEAEAATYHINPFDLTKVWPHADYPLIEVGVLELNKNPENYFAEVEQAAFTPANVVPGIGFSPDKMLQGRLFSYGDTHRYRLGINHHQIPVNAPRCPFHSFHRDGMGRVDGNGGATLNYEPNSFGEWREAKHAAEPPLALDGQAADRWNHRVDEDYYSQPGALFRLMNDDQKQQLFGNIGRHMAGVPEEIQRRQLEHFRRADPAYAAGVAKALGLK</sequence>
<dbReference type="EC" id="1.11.1.6"/>
<dbReference type="EMBL" id="BX640436">
    <property type="protein sequence ID" value="CAE39685.1"/>
    <property type="molecule type" value="Genomic_DNA"/>
</dbReference>
<dbReference type="SMR" id="P0A325"/>
<dbReference type="KEGG" id="bpa:BPP4406"/>
<dbReference type="HOGENOM" id="CLU_010645_2_0_4"/>
<dbReference type="Proteomes" id="UP000001421">
    <property type="component" value="Chromosome"/>
</dbReference>
<dbReference type="GO" id="GO:0005737">
    <property type="term" value="C:cytoplasm"/>
    <property type="evidence" value="ECO:0007669"/>
    <property type="project" value="TreeGrafter"/>
</dbReference>
<dbReference type="GO" id="GO:0004096">
    <property type="term" value="F:catalase activity"/>
    <property type="evidence" value="ECO:0007669"/>
    <property type="project" value="UniProtKB-EC"/>
</dbReference>
<dbReference type="GO" id="GO:0020037">
    <property type="term" value="F:heme binding"/>
    <property type="evidence" value="ECO:0007669"/>
    <property type="project" value="InterPro"/>
</dbReference>
<dbReference type="GO" id="GO:0046872">
    <property type="term" value="F:metal ion binding"/>
    <property type="evidence" value="ECO:0007669"/>
    <property type="project" value="UniProtKB-KW"/>
</dbReference>
<dbReference type="GO" id="GO:0042744">
    <property type="term" value="P:hydrogen peroxide catabolic process"/>
    <property type="evidence" value="ECO:0007669"/>
    <property type="project" value="UniProtKB-KW"/>
</dbReference>
<dbReference type="GO" id="GO:0042542">
    <property type="term" value="P:response to hydrogen peroxide"/>
    <property type="evidence" value="ECO:0007669"/>
    <property type="project" value="TreeGrafter"/>
</dbReference>
<dbReference type="CDD" id="cd08156">
    <property type="entry name" value="catalase_clade_3"/>
    <property type="match status" value="1"/>
</dbReference>
<dbReference type="FunFam" id="2.40.180.10:FF:000001">
    <property type="entry name" value="Catalase"/>
    <property type="match status" value="1"/>
</dbReference>
<dbReference type="Gene3D" id="2.40.180.10">
    <property type="entry name" value="Catalase core domain"/>
    <property type="match status" value="1"/>
</dbReference>
<dbReference type="InterPro" id="IPR018028">
    <property type="entry name" value="Catalase"/>
</dbReference>
<dbReference type="InterPro" id="IPR040333">
    <property type="entry name" value="Catalase_3"/>
</dbReference>
<dbReference type="InterPro" id="IPR024708">
    <property type="entry name" value="Catalase_AS"/>
</dbReference>
<dbReference type="InterPro" id="IPR024711">
    <property type="entry name" value="Catalase_clade1/3"/>
</dbReference>
<dbReference type="InterPro" id="IPR011614">
    <property type="entry name" value="Catalase_core"/>
</dbReference>
<dbReference type="InterPro" id="IPR002226">
    <property type="entry name" value="Catalase_haem_BS"/>
</dbReference>
<dbReference type="InterPro" id="IPR010582">
    <property type="entry name" value="Catalase_immune_responsive"/>
</dbReference>
<dbReference type="InterPro" id="IPR020835">
    <property type="entry name" value="Catalase_sf"/>
</dbReference>
<dbReference type="PANTHER" id="PTHR11465">
    <property type="entry name" value="CATALASE"/>
    <property type="match status" value="1"/>
</dbReference>
<dbReference type="PANTHER" id="PTHR11465:SF61">
    <property type="entry name" value="CATALASE"/>
    <property type="match status" value="1"/>
</dbReference>
<dbReference type="Pfam" id="PF00199">
    <property type="entry name" value="Catalase"/>
    <property type="match status" value="1"/>
</dbReference>
<dbReference type="Pfam" id="PF06628">
    <property type="entry name" value="Catalase-rel"/>
    <property type="match status" value="1"/>
</dbReference>
<dbReference type="PIRSF" id="PIRSF038928">
    <property type="entry name" value="Catalase_clade1-3"/>
    <property type="match status" value="1"/>
</dbReference>
<dbReference type="PRINTS" id="PR00067">
    <property type="entry name" value="CATALASE"/>
</dbReference>
<dbReference type="SMART" id="SM01060">
    <property type="entry name" value="Catalase"/>
    <property type="match status" value="1"/>
</dbReference>
<dbReference type="SUPFAM" id="SSF56634">
    <property type="entry name" value="Heme-dependent catalase-like"/>
    <property type="match status" value="1"/>
</dbReference>
<dbReference type="PROSITE" id="PS00437">
    <property type="entry name" value="CATALASE_1"/>
    <property type="match status" value="1"/>
</dbReference>
<dbReference type="PROSITE" id="PS00438">
    <property type="entry name" value="CATALASE_2"/>
    <property type="match status" value="1"/>
</dbReference>
<dbReference type="PROSITE" id="PS51402">
    <property type="entry name" value="CATALASE_3"/>
    <property type="match status" value="1"/>
</dbReference>
<reference key="1">
    <citation type="journal article" date="2003" name="Nat. Genet.">
        <title>Comparative analysis of the genome sequences of Bordetella pertussis, Bordetella parapertussis and Bordetella bronchiseptica.</title>
        <authorList>
            <person name="Parkhill J."/>
            <person name="Sebaihia M."/>
            <person name="Preston A."/>
            <person name="Murphy L.D."/>
            <person name="Thomson N.R."/>
            <person name="Harris D.E."/>
            <person name="Holden M.T.G."/>
            <person name="Churcher C.M."/>
            <person name="Bentley S.D."/>
            <person name="Mungall K.L."/>
            <person name="Cerdeno-Tarraga A.-M."/>
            <person name="Temple L."/>
            <person name="James K.D."/>
            <person name="Harris B."/>
            <person name="Quail M.A."/>
            <person name="Achtman M."/>
            <person name="Atkin R."/>
            <person name="Baker S."/>
            <person name="Basham D."/>
            <person name="Bason N."/>
            <person name="Cherevach I."/>
            <person name="Chillingworth T."/>
            <person name="Collins M."/>
            <person name="Cronin A."/>
            <person name="Davis P."/>
            <person name="Doggett J."/>
            <person name="Feltwell T."/>
            <person name="Goble A."/>
            <person name="Hamlin N."/>
            <person name="Hauser H."/>
            <person name="Holroyd S."/>
            <person name="Jagels K."/>
            <person name="Leather S."/>
            <person name="Moule S."/>
            <person name="Norberczak H."/>
            <person name="O'Neil S."/>
            <person name="Ormond D."/>
            <person name="Price C."/>
            <person name="Rabbinowitsch E."/>
            <person name="Rutter S."/>
            <person name="Sanders M."/>
            <person name="Saunders D."/>
            <person name="Seeger K."/>
            <person name="Sharp S."/>
            <person name="Simmonds M."/>
            <person name="Skelton J."/>
            <person name="Squares R."/>
            <person name="Squares S."/>
            <person name="Stevens K."/>
            <person name="Unwin L."/>
            <person name="Whitehead S."/>
            <person name="Barrell B.G."/>
            <person name="Maskell D.J."/>
        </authorList>
    </citation>
    <scope>NUCLEOTIDE SEQUENCE [LARGE SCALE GENOMIC DNA]</scope>
    <source>
        <strain>12822 / ATCC BAA-587 / NCTC 13253</strain>
    </source>
</reference>
<accession>P0A325</accession>
<accession>P48062</accession>